<gene>
    <name evidence="1" type="primary">coaD</name>
    <name type="ordered locus">Mfla_0737</name>
</gene>
<name>COAD_METFK</name>
<proteinExistence type="inferred from homology"/>
<evidence type="ECO:0000255" key="1">
    <source>
        <dbReference type="HAMAP-Rule" id="MF_00151"/>
    </source>
</evidence>
<organism>
    <name type="scientific">Methylobacillus flagellatus (strain ATCC 51484 / DSM 6875 / VKM B-1610 / KT)</name>
    <dbReference type="NCBI Taxonomy" id="265072"/>
    <lineage>
        <taxon>Bacteria</taxon>
        <taxon>Pseudomonadati</taxon>
        <taxon>Pseudomonadota</taxon>
        <taxon>Betaproteobacteria</taxon>
        <taxon>Nitrosomonadales</taxon>
        <taxon>Methylophilaceae</taxon>
        <taxon>Methylobacillus</taxon>
    </lineage>
</organism>
<sequence length="160" mass="17829">MSQLKVVYPGTFDPITRGHEDIVRRAAGLFDHVVVAVAKSPGKHPMFTLDERVDLASSILSDCPNVEVLGFSGLLMHFVREQGARAVVRGLRAVSDFEYEFQLAGMNRQLFPEMETIFLTPAEQHMFVSASLVREIAQLKGDISQFVSPLVQERITLKLA</sequence>
<accession>Q1H3D2</accession>
<dbReference type="EC" id="2.7.7.3" evidence="1"/>
<dbReference type="EMBL" id="CP000284">
    <property type="protein sequence ID" value="ABE49005.1"/>
    <property type="molecule type" value="Genomic_DNA"/>
</dbReference>
<dbReference type="RefSeq" id="WP_011479102.1">
    <property type="nucleotide sequence ID" value="NC_007947.1"/>
</dbReference>
<dbReference type="SMR" id="Q1H3D2"/>
<dbReference type="STRING" id="265072.Mfla_0737"/>
<dbReference type="KEGG" id="mfa:Mfla_0737"/>
<dbReference type="eggNOG" id="COG0669">
    <property type="taxonomic scope" value="Bacteria"/>
</dbReference>
<dbReference type="HOGENOM" id="CLU_100149_0_1_4"/>
<dbReference type="OrthoDB" id="9806661at2"/>
<dbReference type="UniPathway" id="UPA00241">
    <property type="reaction ID" value="UER00355"/>
</dbReference>
<dbReference type="Proteomes" id="UP000002440">
    <property type="component" value="Chromosome"/>
</dbReference>
<dbReference type="GO" id="GO:0005737">
    <property type="term" value="C:cytoplasm"/>
    <property type="evidence" value="ECO:0007669"/>
    <property type="project" value="UniProtKB-SubCell"/>
</dbReference>
<dbReference type="GO" id="GO:0005524">
    <property type="term" value="F:ATP binding"/>
    <property type="evidence" value="ECO:0007669"/>
    <property type="project" value="UniProtKB-KW"/>
</dbReference>
<dbReference type="GO" id="GO:0004595">
    <property type="term" value="F:pantetheine-phosphate adenylyltransferase activity"/>
    <property type="evidence" value="ECO:0007669"/>
    <property type="project" value="UniProtKB-UniRule"/>
</dbReference>
<dbReference type="GO" id="GO:0015937">
    <property type="term" value="P:coenzyme A biosynthetic process"/>
    <property type="evidence" value="ECO:0007669"/>
    <property type="project" value="UniProtKB-UniRule"/>
</dbReference>
<dbReference type="CDD" id="cd02163">
    <property type="entry name" value="PPAT"/>
    <property type="match status" value="1"/>
</dbReference>
<dbReference type="Gene3D" id="3.40.50.620">
    <property type="entry name" value="HUPs"/>
    <property type="match status" value="1"/>
</dbReference>
<dbReference type="HAMAP" id="MF_00151">
    <property type="entry name" value="PPAT_bact"/>
    <property type="match status" value="1"/>
</dbReference>
<dbReference type="InterPro" id="IPR004821">
    <property type="entry name" value="Cyt_trans-like"/>
</dbReference>
<dbReference type="InterPro" id="IPR001980">
    <property type="entry name" value="PPAT"/>
</dbReference>
<dbReference type="InterPro" id="IPR014729">
    <property type="entry name" value="Rossmann-like_a/b/a_fold"/>
</dbReference>
<dbReference type="NCBIfam" id="TIGR01510">
    <property type="entry name" value="coaD_prev_kdtB"/>
    <property type="match status" value="1"/>
</dbReference>
<dbReference type="NCBIfam" id="TIGR00125">
    <property type="entry name" value="cyt_tran_rel"/>
    <property type="match status" value="1"/>
</dbReference>
<dbReference type="PANTHER" id="PTHR21342">
    <property type="entry name" value="PHOSPHOPANTETHEINE ADENYLYLTRANSFERASE"/>
    <property type="match status" value="1"/>
</dbReference>
<dbReference type="PANTHER" id="PTHR21342:SF1">
    <property type="entry name" value="PHOSPHOPANTETHEINE ADENYLYLTRANSFERASE"/>
    <property type="match status" value="1"/>
</dbReference>
<dbReference type="Pfam" id="PF01467">
    <property type="entry name" value="CTP_transf_like"/>
    <property type="match status" value="1"/>
</dbReference>
<dbReference type="PRINTS" id="PR01020">
    <property type="entry name" value="LPSBIOSNTHSS"/>
</dbReference>
<dbReference type="SUPFAM" id="SSF52374">
    <property type="entry name" value="Nucleotidylyl transferase"/>
    <property type="match status" value="1"/>
</dbReference>
<protein>
    <recommendedName>
        <fullName evidence="1">Phosphopantetheine adenylyltransferase</fullName>
        <ecNumber evidence="1">2.7.7.3</ecNumber>
    </recommendedName>
    <alternativeName>
        <fullName evidence="1">Dephospho-CoA pyrophosphorylase</fullName>
    </alternativeName>
    <alternativeName>
        <fullName evidence="1">Pantetheine-phosphate adenylyltransferase</fullName>
        <shortName evidence="1">PPAT</shortName>
    </alternativeName>
</protein>
<comment type="function">
    <text evidence="1">Reversibly transfers an adenylyl group from ATP to 4'-phosphopantetheine, yielding dephospho-CoA (dPCoA) and pyrophosphate.</text>
</comment>
<comment type="catalytic activity">
    <reaction evidence="1">
        <text>(R)-4'-phosphopantetheine + ATP + H(+) = 3'-dephospho-CoA + diphosphate</text>
        <dbReference type="Rhea" id="RHEA:19801"/>
        <dbReference type="ChEBI" id="CHEBI:15378"/>
        <dbReference type="ChEBI" id="CHEBI:30616"/>
        <dbReference type="ChEBI" id="CHEBI:33019"/>
        <dbReference type="ChEBI" id="CHEBI:57328"/>
        <dbReference type="ChEBI" id="CHEBI:61723"/>
        <dbReference type="EC" id="2.7.7.3"/>
    </reaction>
</comment>
<comment type="cofactor">
    <cofactor evidence="1">
        <name>Mg(2+)</name>
        <dbReference type="ChEBI" id="CHEBI:18420"/>
    </cofactor>
</comment>
<comment type="pathway">
    <text evidence="1">Cofactor biosynthesis; coenzyme A biosynthesis; CoA from (R)-pantothenate: step 4/5.</text>
</comment>
<comment type="subunit">
    <text evidence="1">Homohexamer.</text>
</comment>
<comment type="subcellular location">
    <subcellularLocation>
        <location evidence="1">Cytoplasm</location>
    </subcellularLocation>
</comment>
<comment type="similarity">
    <text evidence="1">Belongs to the bacterial CoaD family.</text>
</comment>
<keyword id="KW-0067">ATP-binding</keyword>
<keyword id="KW-0173">Coenzyme A biosynthesis</keyword>
<keyword id="KW-0963">Cytoplasm</keyword>
<keyword id="KW-0460">Magnesium</keyword>
<keyword id="KW-0547">Nucleotide-binding</keyword>
<keyword id="KW-0548">Nucleotidyltransferase</keyword>
<keyword id="KW-1185">Reference proteome</keyword>
<keyword id="KW-0808">Transferase</keyword>
<feature type="chain" id="PRO_1000011175" description="Phosphopantetheine adenylyltransferase">
    <location>
        <begin position="1"/>
        <end position="160"/>
    </location>
</feature>
<feature type="binding site" evidence="1">
    <location>
        <begin position="11"/>
        <end position="12"/>
    </location>
    <ligand>
        <name>ATP</name>
        <dbReference type="ChEBI" id="CHEBI:30616"/>
    </ligand>
</feature>
<feature type="binding site" evidence="1">
    <location>
        <position position="11"/>
    </location>
    <ligand>
        <name>substrate</name>
    </ligand>
</feature>
<feature type="binding site" evidence="1">
    <location>
        <position position="19"/>
    </location>
    <ligand>
        <name>ATP</name>
        <dbReference type="ChEBI" id="CHEBI:30616"/>
    </ligand>
</feature>
<feature type="binding site" evidence="1">
    <location>
        <position position="43"/>
    </location>
    <ligand>
        <name>substrate</name>
    </ligand>
</feature>
<feature type="binding site" evidence="1">
    <location>
        <position position="75"/>
    </location>
    <ligand>
        <name>substrate</name>
    </ligand>
</feature>
<feature type="binding site" evidence="1">
    <location>
        <position position="89"/>
    </location>
    <ligand>
        <name>substrate</name>
    </ligand>
</feature>
<feature type="binding site" evidence="1">
    <location>
        <begin position="90"/>
        <end position="92"/>
    </location>
    <ligand>
        <name>ATP</name>
        <dbReference type="ChEBI" id="CHEBI:30616"/>
    </ligand>
</feature>
<feature type="binding site" evidence="1">
    <location>
        <position position="100"/>
    </location>
    <ligand>
        <name>ATP</name>
        <dbReference type="ChEBI" id="CHEBI:30616"/>
    </ligand>
</feature>
<feature type="binding site" evidence="1">
    <location>
        <begin position="125"/>
        <end position="131"/>
    </location>
    <ligand>
        <name>ATP</name>
        <dbReference type="ChEBI" id="CHEBI:30616"/>
    </ligand>
</feature>
<feature type="site" description="Transition state stabilizer" evidence="1">
    <location>
        <position position="19"/>
    </location>
</feature>
<reference key="1">
    <citation type="submission" date="2006-03" db="EMBL/GenBank/DDBJ databases">
        <title>Complete sequence of Methylobacillus flagellatus KT.</title>
        <authorList>
            <consortium name="US DOE Joint Genome Institute"/>
            <person name="Copeland A."/>
            <person name="Lucas S."/>
            <person name="Lapidus A."/>
            <person name="Barry K."/>
            <person name="Detter J.C."/>
            <person name="Glavina del Rio T."/>
            <person name="Hammon N."/>
            <person name="Israni S."/>
            <person name="Dalin E."/>
            <person name="Tice H."/>
            <person name="Pitluck S."/>
            <person name="Brettin T."/>
            <person name="Bruce D."/>
            <person name="Han C."/>
            <person name="Tapia R."/>
            <person name="Saunders E."/>
            <person name="Gilna P."/>
            <person name="Schmutz J."/>
            <person name="Larimer F."/>
            <person name="Land M."/>
            <person name="Kyrpides N."/>
            <person name="Anderson I."/>
            <person name="Richardson P."/>
        </authorList>
    </citation>
    <scope>NUCLEOTIDE SEQUENCE [LARGE SCALE GENOMIC DNA]</scope>
    <source>
        <strain>ATCC 51484 / DSM 6875 / VKM B-1610 / KT</strain>
    </source>
</reference>